<keyword id="KW-0067">ATP-binding</keyword>
<keyword id="KW-0150">Chloroplast</keyword>
<keyword id="KW-0903">Direct protein sequencing</keyword>
<keyword id="KW-0547">Nucleotide-binding</keyword>
<keyword id="KW-0934">Plastid</keyword>
<keyword id="KW-0346">Stress response</keyword>
<evidence type="ECO:0000250" key="1"/>
<evidence type="ECO:0000305" key="2"/>
<sequence>SFQCELVFAK</sequence>
<protein>
    <recommendedName>
        <fullName>Ribulose bisphosphate carboxylase/oxygenase activase, chloroplastic</fullName>
        <shortName>RA</shortName>
        <shortName>RuBisCO activase</shortName>
    </recommendedName>
    <alternativeName>
        <fullName>Water stress-responsive protein 4</fullName>
    </alternativeName>
</protein>
<comment type="function">
    <text evidence="1">Activation of RuBisCO (ribulose-1,5-bisphosphate carboxylase/oxygenase; EC 4.1.1.39) involves the ATP-dependent carboxylation of the epsilon-amino group of lysine leading to a carbamate structure.</text>
</comment>
<comment type="subcellular location">
    <subcellularLocation>
        <location evidence="1">Plastid</location>
        <location evidence="1">Chloroplast stroma</location>
    </subcellularLocation>
</comment>
<comment type="induction">
    <text>By water stress.</text>
</comment>
<comment type="similarity">
    <text evidence="2">Belongs to the RuBisCO activase family.</text>
</comment>
<reference key="1">
    <citation type="journal article" date="1998" name="Plant Mol. Biol.">
        <title>Water-deficit-responsive proteins in maritime pine.</title>
        <authorList>
            <person name="Costa P."/>
            <person name="Bahrman N."/>
            <person name="Frigerio J.-M."/>
            <person name="Kremer A."/>
            <person name="Plomion C."/>
        </authorList>
    </citation>
    <scope>PROTEIN SEQUENCE</scope>
    <source>
        <tissue>Needle</tissue>
    </source>
</reference>
<reference key="2">
    <citation type="journal article" date="1999" name="Electrophoresis">
        <title>Separation and characterization of needle and xylem maritime pine proteins.</title>
        <authorList>
            <person name="Costa P."/>
            <person name="Pionneau C."/>
            <person name="Bauw G."/>
            <person name="Dubos C."/>
            <person name="Bahrman N."/>
            <person name="Kremer A."/>
            <person name="Frigerio J.-M."/>
            <person name="Plomion C."/>
        </authorList>
    </citation>
    <scope>PROTEIN SEQUENCE</scope>
    <source>
        <tissue>Needle</tissue>
    </source>
</reference>
<accession>P81084</accession>
<name>RCA_PINPS</name>
<proteinExistence type="evidence at protein level"/>
<organism>
    <name type="scientific">Pinus pinaster</name>
    <name type="common">Maritime pine</name>
    <dbReference type="NCBI Taxonomy" id="71647"/>
    <lineage>
        <taxon>Eukaryota</taxon>
        <taxon>Viridiplantae</taxon>
        <taxon>Streptophyta</taxon>
        <taxon>Embryophyta</taxon>
        <taxon>Tracheophyta</taxon>
        <taxon>Spermatophyta</taxon>
        <taxon>Pinopsida</taxon>
        <taxon>Pinidae</taxon>
        <taxon>Conifers I</taxon>
        <taxon>Pinales</taxon>
        <taxon>Pinaceae</taxon>
        <taxon>Pinus</taxon>
        <taxon>Pinus subgen. Pinus</taxon>
    </lineage>
</organism>
<dbReference type="GO" id="GO:0009570">
    <property type="term" value="C:chloroplast stroma"/>
    <property type="evidence" value="ECO:0007669"/>
    <property type="project" value="UniProtKB-SubCell"/>
</dbReference>
<dbReference type="GO" id="GO:0005524">
    <property type="term" value="F:ATP binding"/>
    <property type="evidence" value="ECO:0007669"/>
    <property type="project" value="UniProtKB-KW"/>
</dbReference>
<feature type="chain" id="PRO_0000216425" description="Ribulose bisphosphate carboxylase/oxygenase activase, chloroplastic">
    <location>
        <begin position="1" status="less than"/>
        <end position="10" status="greater than"/>
    </location>
</feature>
<feature type="non-terminal residue">
    <location>
        <position position="1"/>
    </location>
</feature>
<feature type="non-terminal residue">
    <location>
        <position position="10"/>
    </location>
</feature>